<comment type="catalytic activity">
    <reaction evidence="1">
        <text>aldehydo-D-galactose 6-phosphate = keto-D-tagatose 6-phosphate</text>
        <dbReference type="Rhea" id="RHEA:13033"/>
        <dbReference type="ChEBI" id="CHEBI:58255"/>
        <dbReference type="ChEBI" id="CHEBI:134283"/>
        <dbReference type="EC" id="5.3.1.26"/>
    </reaction>
</comment>
<comment type="pathway">
    <text evidence="1">Carbohydrate metabolism; D-galactose 6-phosphate degradation; D-tagatose 6-phosphate from D-galactose 6-phosphate: step 1/1.</text>
</comment>
<comment type="subunit">
    <text evidence="1">Heteromultimeric protein consisting of LacA and LacB.</text>
</comment>
<comment type="similarity">
    <text evidence="1">Belongs to the LacAB/RpiB family.</text>
</comment>
<reference key="1">
    <citation type="journal article" date="2010" name="Genome Biol.">
        <title>Structure and dynamics of the pan-genome of Streptococcus pneumoniae and closely related species.</title>
        <authorList>
            <person name="Donati C."/>
            <person name="Hiller N.L."/>
            <person name="Tettelin H."/>
            <person name="Muzzi A."/>
            <person name="Croucher N.J."/>
            <person name="Angiuoli S.V."/>
            <person name="Oggioni M."/>
            <person name="Dunning Hotopp J.C."/>
            <person name="Hu F.Z."/>
            <person name="Riley D.R."/>
            <person name="Covacci A."/>
            <person name="Mitchell T.J."/>
            <person name="Bentley S.D."/>
            <person name="Kilian M."/>
            <person name="Ehrlich G.D."/>
            <person name="Rappuoli R."/>
            <person name="Moxon E.R."/>
            <person name="Masignani V."/>
        </authorList>
    </citation>
    <scope>NUCLEOTIDE SEQUENCE [LARGE SCALE GENOMIC DNA]</scope>
    <source>
        <strain>Hungary19A-6</strain>
    </source>
</reference>
<sequence>MSIVIGADAAGLRLKEVVKDFLEKENFHLVDVTAEGQDFVDVTLAVAAEVNKEEQNLGIVIDAYGAGPFMVATKIKGMVAAEVSDERSAYMTRGHNNSRMITMGAQLVGDELAKNIAKGFVNGKYDGGRHQIRVDMLNKMG</sequence>
<accession>B1IBZ7</accession>
<evidence type="ECO:0000255" key="1">
    <source>
        <dbReference type="HAMAP-Rule" id="MF_01555"/>
    </source>
</evidence>
<feature type="chain" id="PRO_1000147083" description="Galactose-6-phosphate isomerase subunit LacA">
    <location>
        <begin position="1"/>
        <end position="141"/>
    </location>
</feature>
<gene>
    <name evidence="1" type="primary">lacA</name>
    <name type="ordered locus">SPH_1311</name>
</gene>
<dbReference type="EC" id="5.3.1.26" evidence="1"/>
<dbReference type="EMBL" id="CP000936">
    <property type="protein sequence ID" value="ACA36024.1"/>
    <property type="molecule type" value="Genomic_DNA"/>
</dbReference>
<dbReference type="RefSeq" id="WP_000029272.1">
    <property type="nucleotide sequence ID" value="NC_010380.1"/>
</dbReference>
<dbReference type="SMR" id="B1IBZ7"/>
<dbReference type="GeneID" id="45653585"/>
<dbReference type="KEGG" id="spv:SPH_1311"/>
<dbReference type="HOGENOM" id="CLU_091396_4_2_9"/>
<dbReference type="UniPathway" id="UPA00702">
    <property type="reaction ID" value="UER00714"/>
</dbReference>
<dbReference type="Proteomes" id="UP000002163">
    <property type="component" value="Chromosome"/>
</dbReference>
<dbReference type="GO" id="GO:0050044">
    <property type="term" value="F:galactose-6-phosphate isomerase activity"/>
    <property type="evidence" value="ECO:0007669"/>
    <property type="project" value="UniProtKB-UniRule"/>
</dbReference>
<dbReference type="GO" id="GO:0004751">
    <property type="term" value="F:ribose-5-phosphate isomerase activity"/>
    <property type="evidence" value="ECO:0007669"/>
    <property type="project" value="TreeGrafter"/>
</dbReference>
<dbReference type="GO" id="GO:0019316">
    <property type="term" value="P:D-allose catabolic process"/>
    <property type="evidence" value="ECO:0007669"/>
    <property type="project" value="TreeGrafter"/>
</dbReference>
<dbReference type="GO" id="GO:0019388">
    <property type="term" value="P:galactose catabolic process"/>
    <property type="evidence" value="ECO:0007669"/>
    <property type="project" value="UniProtKB-UniPathway"/>
</dbReference>
<dbReference type="GO" id="GO:0019512">
    <property type="term" value="P:lactose catabolic process via tagatose-6-phosphate"/>
    <property type="evidence" value="ECO:0007669"/>
    <property type="project" value="UniProtKB-UniRule"/>
</dbReference>
<dbReference type="GO" id="GO:0009052">
    <property type="term" value="P:pentose-phosphate shunt, non-oxidative branch"/>
    <property type="evidence" value="ECO:0007669"/>
    <property type="project" value="TreeGrafter"/>
</dbReference>
<dbReference type="Gene3D" id="3.40.1400.10">
    <property type="entry name" value="Sugar-phosphate isomerase, RpiB/LacA/LacB"/>
    <property type="match status" value="1"/>
</dbReference>
<dbReference type="HAMAP" id="MF_01555">
    <property type="entry name" value="LacA"/>
    <property type="match status" value="1"/>
</dbReference>
<dbReference type="InterPro" id="IPR004783">
    <property type="entry name" value="LacA"/>
</dbReference>
<dbReference type="InterPro" id="IPR003500">
    <property type="entry name" value="RpiB_LacA_LacB"/>
</dbReference>
<dbReference type="InterPro" id="IPR036569">
    <property type="entry name" value="RpiB_LacA_LacB_sf"/>
</dbReference>
<dbReference type="NCBIfam" id="TIGR01118">
    <property type="entry name" value="lacA"/>
    <property type="match status" value="1"/>
</dbReference>
<dbReference type="NCBIfam" id="NF006380">
    <property type="entry name" value="PRK08621.1"/>
    <property type="match status" value="1"/>
</dbReference>
<dbReference type="NCBIfam" id="NF009257">
    <property type="entry name" value="PRK12613.1"/>
    <property type="match status" value="1"/>
</dbReference>
<dbReference type="NCBIfam" id="TIGR00689">
    <property type="entry name" value="rpiB_lacA_lacB"/>
    <property type="match status" value="1"/>
</dbReference>
<dbReference type="PANTHER" id="PTHR30345:SF5">
    <property type="entry name" value="GALACTOSE-6-PHOSPHATE ISOMERASE SUBUNIT LACA"/>
    <property type="match status" value="1"/>
</dbReference>
<dbReference type="PANTHER" id="PTHR30345">
    <property type="entry name" value="RIBOSE-5-PHOSPHATE ISOMERASE B"/>
    <property type="match status" value="1"/>
</dbReference>
<dbReference type="Pfam" id="PF02502">
    <property type="entry name" value="LacAB_rpiB"/>
    <property type="match status" value="1"/>
</dbReference>
<dbReference type="PIRSF" id="PIRSF005384">
    <property type="entry name" value="RpiB_LacA_B"/>
    <property type="match status" value="1"/>
</dbReference>
<dbReference type="SUPFAM" id="SSF89623">
    <property type="entry name" value="Ribose/Galactose isomerase RpiB/AlsB"/>
    <property type="match status" value="1"/>
</dbReference>
<organism>
    <name type="scientific">Streptococcus pneumoniae (strain Hungary19A-6)</name>
    <dbReference type="NCBI Taxonomy" id="487214"/>
    <lineage>
        <taxon>Bacteria</taxon>
        <taxon>Bacillati</taxon>
        <taxon>Bacillota</taxon>
        <taxon>Bacilli</taxon>
        <taxon>Lactobacillales</taxon>
        <taxon>Streptococcaceae</taxon>
        <taxon>Streptococcus</taxon>
    </lineage>
</organism>
<proteinExistence type="inferred from homology"/>
<name>LACA_STRPI</name>
<keyword id="KW-0413">Isomerase</keyword>
<keyword id="KW-0423">Lactose metabolism</keyword>
<protein>
    <recommendedName>
        <fullName evidence="1">Galactose-6-phosphate isomerase subunit LacA</fullName>
        <ecNumber evidence="1">5.3.1.26</ecNumber>
    </recommendedName>
</protein>